<feature type="chain" id="PRO_1000124233" description="Protease HtpX homolog">
    <location>
        <begin position="1"/>
        <end position="287"/>
    </location>
</feature>
<feature type="transmembrane region" description="Helical" evidence="1">
    <location>
        <begin position="10"/>
        <end position="30"/>
    </location>
</feature>
<feature type="transmembrane region" description="Helical" evidence="1">
    <location>
        <begin position="33"/>
        <end position="53"/>
    </location>
</feature>
<feature type="transmembrane region" description="Helical" evidence="1">
    <location>
        <begin position="145"/>
        <end position="165"/>
    </location>
</feature>
<feature type="transmembrane region" description="Helical" evidence="1">
    <location>
        <begin position="181"/>
        <end position="201"/>
    </location>
</feature>
<feature type="active site" evidence="1">
    <location>
        <position position="136"/>
    </location>
</feature>
<feature type="binding site" evidence="1">
    <location>
        <position position="135"/>
    </location>
    <ligand>
        <name>Zn(2+)</name>
        <dbReference type="ChEBI" id="CHEBI:29105"/>
        <note>catalytic</note>
    </ligand>
</feature>
<feature type="binding site" evidence="1">
    <location>
        <position position="139"/>
    </location>
    <ligand>
        <name>Zn(2+)</name>
        <dbReference type="ChEBI" id="CHEBI:29105"/>
        <note>catalytic</note>
    </ligand>
</feature>
<feature type="binding site" evidence="1">
    <location>
        <position position="206"/>
    </location>
    <ligand>
        <name>Zn(2+)</name>
        <dbReference type="ChEBI" id="CHEBI:29105"/>
        <note>catalytic</note>
    </ligand>
</feature>
<sequence length="287" mass="30998">MTWHPQANRLKTFVLLVGMSTLIVVVGAIFGRTALFFATLVAVGINVYTYYNSDKLALRAMHAQPVSEVQAPVMYRIVRELATGAHQPMPRLYISDTNAPNAFATGRNPRNAAVCCTTGILEILNERELRAVLGHELSHVYNRDILISCVAGALAGVITALANMAMWAGTFGTTRDEENPFALLLVSLLGPIAATVVRLAVSRSREYQADESGAMLTGDPLALASALRKISSGVQAAPLPPEPQLASQAHLMIANPFRVGDRIGSLFSTHPPIEDRIRRLETMVAGR</sequence>
<comment type="cofactor">
    <cofactor evidence="1">
        <name>Zn(2+)</name>
        <dbReference type="ChEBI" id="CHEBI:29105"/>
    </cofactor>
    <text evidence="1">Binds 1 zinc ion per subunit.</text>
</comment>
<comment type="subcellular location">
    <subcellularLocation>
        <location evidence="1">Cell membrane</location>
        <topology evidence="1">Multi-pass membrane protein</topology>
    </subcellularLocation>
</comment>
<comment type="similarity">
    <text evidence="1">Belongs to the peptidase M48B family.</text>
</comment>
<evidence type="ECO:0000255" key="1">
    <source>
        <dbReference type="HAMAP-Rule" id="MF_00188"/>
    </source>
</evidence>
<name>HTPX_MYCLB</name>
<organism>
    <name type="scientific">Mycobacterium leprae (strain Br4923)</name>
    <dbReference type="NCBI Taxonomy" id="561304"/>
    <lineage>
        <taxon>Bacteria</taxon>
        <taxon>Bacillati</taxon>
        <taxon>Actinomycetota</taxon>
        <taxon>Actinomycetes</taxon>
        <taxon>Mycobacteriales</taxon>
        <taxon>Mycobacteriaceae</taxon>
        <taxon>Mycobacterium</taxon>
    </lineage>
</organism>
<gene>
    <name evidence="1" type="primary">htpX</name>
    <name type="ordered locus">MLBr02278</name>
</gene>
<reference key="1">
    <citation type="journal article" date="2009" name="Nat. Genet.">
        <title>Comparative genomic and phylogeographic analysis of Mycobacterium leprae.</title>
        <authorList>
            <person name="Monot M."/>
            <person name="Honore N."/>
            <person name="Garnier T."/>
            <person name="Zidane N."/>
            <person name="Sherafi D."/>
            <person name="Paniz-Mondolfi A."/>
            <person name="Matsuoka M."/>
            <person name="Taylor G.M."/>
            <person name="Donoghue H.D."/>
            <person name="Bouwman A."/>
            <person name="Mays S."/>
            <person name="Watson C."/>
            <person name="Lockwood D."/>
            <person name="Khamispour A."/>
            <person name="Dowlati Y."/>
            <person name="Jianping S."/>
            <person name="Rea T.H."/>
            <person name="Vera-Cabrera L."/>
            <person name="Stefani M.M."/>
            <person name="Banu S."/>
            <person name="Macdonald M."/>
            <person name="Sapkota B.R."/>
            <person name="Spencer J.S."/>
            <person name="Thomas J."/>
            <person name="Harshman K."/>
            <person name="Singh P."/>
            <person name="Busso P."/>
            <person name="Gattiker A."/>
            <person name="Rougemont J."/>
            <person name="Brennan P.J."/>
            <person name="Cole S.T."/>
        </authorList>
    </citation>
    <scope>NUCLEOTIDE SEQUENCE [LARGE SCALE GENOMIC DNA]</scope>
    <source>
        <strain>Br4923</strain>
    </source>
</reference>
<accession>B8ZSY8</accession>
<protein>
    <recommendedName>
        <fullName evidence="1">Protease HtpX homolog</fullName>
        <ecNumber evidence="1">3.4.24.-</ecNumber>
    </recommendedName>
</protein>
<proteinExistence type="inferred from homology"/>
<dbReference type="EC" id="3.4.24.-" evidence="1"/>
<dbReference type="EMBL" id="FM211192">
    <property type="protein sequence ID" value="CAR72376.1"/>
    <property type="molecule type" value="Genomic_DNA"/>
</dbReference>
<dbReference type="KEGG" id="mlb:MLBr02278"/>
<dbReference type="HOGENOM" id="CLU_042266_3_1_11"/>
<dbReference type="Proteomes" id="UP000006900">
    <property type="component" value="Chromosome"/>
</dbReference>
<dbReference type="GO" id="GO:0005886">
    <property type="term" value="C:plasma membrane"/>
    <property type="evidence" value="ECO:0007669"/>
    <property type="project" value="UniProtKB-SubCell"/>
</dbReference>
<dbReference type="GO" id="GO:0004222">
    <property type="term" value="F:metalloendopeptidase activity"/>
    <property type="evidence" value="ECO:0007669"/>
    <property type="project" value="UniProtKB-UniRule"/>
</dbReference>
<dbReference type="GO" id="GO:0008270">
    <property type="term" value="F:zinc ion binding"/>
    <property type="evidence" value="ECO:0007669"/>
    <property type="project" value="UniProtKB-UniRule"/>
</dbReference>
<dbReference type="GO" id="GO:0006508">
    <property type="term" value="P:proteolysis"/>
    <property type="evidence" value="ECO:0007669"/>
    <property type="project" value="UniProtKB-KW"/>
</dbReference>
<dbReference type="CDD" id="cd07336">
    <property type="entry name" value="M48B_HtpX_like"/>
    <property type="match status" value="1"/>
</dbReference>
<dbReference type="FunFam" id="3.30.2010.10:FF:000008">
    <property type="entry name" value="Protease HtpX homolog"/>
    <property type="match status" value="1"/>
</dbReference>
<dbReference type="Gene3D" id="3.30.2010.10">
    <property type="entry name" value="Metalloproteases ('zincins'), catalytic domain"/>
    <property type="match status" value="1"/>
</dbReference>
<dbReference type="HAMAP" id="MF_00188">
    <property type="entry name" value="Pept_M48_protease_HtpX"/>
    <property type="match status" value="1"/>
</dbReference>
<dbReference type="InterPro" id="IPR050083">
    <property type="entry name" value="HtpX_protease"/>
</dbReference>
<dbReference type="InterPro" id="IPR022919">
    <property type="entry name" value="Pept_M48_protease_HtpX"/>
</dbReference>
<dbReference type="InterPro" id="IPR001915">
    <property type="entry name" value="Peptidase_M48"/>
</dbReference>
<dbReference type="NCBIfam" id="NF002839">
    <property type="entry name" value="PRK03072.1"/>
    <property type="match status" value="1"/>
</dbReference>
<dbReference type="PANTHER" id="PTHR43221">
    <property type="entry name" value="PROTEASE HTPX"/>
    <property type="match status" value="1"/>
</dbReference>
<dbReference type="PANTHER" id="PTHR43221:SF1">
    <property type="entry name" value="PROTEASE HTPX"/>
    <property type="match status" value="1"/>
</dbReference>
<dbReference type="Pfam" id="PF01435">
    <property type="entry name" value="Peptidase_M48"/>
    <property type="match status" value="1"/>
</dbReference>
<dbReference type="PROSITE" id="PS00142">
    <property type="entry name" value="ZINC_PROTEASE"/>
    <property type="match status" value="1"/>
</dbReference>
<keyword id="KW-1003">Cell membrane</keyword>
<keyword id="KW-0378">Hydrolase</keyword>
<keyword id="KW-0472">Membrane</keyword>
<keyword id="KW-0479">Metal-binding</keyword>
<keyword id="KW-0482">Metalloprotease</keyword>
<keyword id="KW-0645">Protease</keyword>
<keyword id="KW-0812">Transmembrane</keyword>
<keyword id="KW-1133">Transmembrane helix</keyword>
<keyword id="KW-0862">Zinc</keyword>